<feature type="signal peptide" evidence="2">
    <location>
        <begin position="1"/>
        <end position="21"/>
    </location>
</feature>
<feature type="chain" id="PRO_0000395095" description="Probable endo-1,3(4)-beta-glucanase NFIA_089530">
    <location>
        <begin position="22"/>
        <end position="629"/>
    </location>
</feature>
<feature type="propeptide" id="PRO_0000395096" description="Removed in mature form" evidence="2">
    <location>
        <begin position="630"/>
        <end position="651"/>
    </location>
</feature>
<feature type="domain" description="GH16" evidence="3">
    <location>
        <begin position="36"/>
        <end position="289"/>
    </location>
</feature>
<feature type="region of interest" description="Disordered" evidence="4">
    <location>
        <begin position="364"/>
        <end position="422"/>
    </location>
</feature>
<feature type="region of interest" description="Disordered" evidence="4">
    <location>
        <begin position="508"/>
        <end position="557"/>
    </location>
</feature>
<feature type="compositionally biased region" description="Low complexity" evidence="4">
    <location>
        <begin position="364"/>
        <end position="378"/>
    </location>
</feature>
<feature type="compositionally biased region" description="Polar residues" evidence="4">
    <location>
        <begin position="379"/>
        <end position="400"/>
    </location>
</feature>
<feature type="compositionally biased region" description="Polar residues" evidence="4">
    <location>
        <begin position="520"/>
        <end position="535"/>
    </location>
</feature>
<feature type="compositionally biased region" description="Low complexity" evidence="4">
    <location>
        <begin position="542"/>
        <end position="557"/>
    </location>
</feature>
<feature type="active site" description="Nucleophile" evidence="1">
    <location>
        <position position="145"/>
    </location>
</feature>
<feature type="active site" description="Proton donor" evidence="1">
    <location>
        <position position="150"/>
    </location>
</feature>
<feature type="lipid moiety-binding region" description="GPI-anchor amidated asparagine" evidence="2">
    <location>
        <position position="629"/>
    </location>
</feature>
<feature type="glycosylation site" description="N-linked (GlcNAc...) asparagine" evidence="2">
    <location>
        <position position="64"/>
    </location>
</feature>
<feature type="glycosylation site" description="N-linked (GlcNAc...) asparagine" evidence="2">
    <location>
        <position position="200"/>
    </location>
</feature>
<proteinExistence type="inferred from homology"/>
<sequence>MAPSSLFLSVGSLIASSLVSATALEARQSQTYQLAESWQGESFINDWNFFDRADPTNGYVTYVNQSFAEQSGLVKVTQSGSFYMGVDYESTLNPNGPGRESVRIETKNYYTEGLYVIDIEHMPGSICGTWPAFWSVGKDWPNDGEIDIIEGVNLQKANKIVLHTSGSCDVSGSNDMTGTLSSSECGEASGTVGCVVKGTNGSSGDPFNEAGGGVYAMEWTDTFIKIWFFPRSQIPASLSSGNPDTSSFGTPMAHLQGSCDFAERFKAQKFIIDTTFCGDWAGNVFAESTCPMSDPSSPMQSCVNYVAQNPAAFKEAYWEINSIKVYQYGVSAASSAAVSQATASKVEGTLVSVQAANTATPTVPVPAETTAVPQPAQTNTVATSAADYATQSSAETTTVPAATGAPSVSAAEGGDSELESTSTVYVTSTTTICPVAESSSAAAAGGKKDAPFNGVSGAEVAATSVAAAPAAATSEHPGADAIANSAAATSTVAKSEGVASQLTAGALSEIPTAPPEPVSQAVSTGSFDDSDTAQGDSEEHGSIASASAAPSTIPVPASSSAAALGGSSIASSFASSRLVPRPTGSSTAASVTAIATWSPTAGERASGTAKGSATLTAPSEVVFTPGLSNGANRMSVGLSGLIGVMFIAALA</sequence>
<accession>A1DHY9</accession>
<gene>
    <name type="ORF">NFIA_089530</name>
</gene>
<reference key="1">
    <citation type="journal article" date="2008" name="PLoS Genet.">
        <title>Genomic islands in the pathogenic filamentous fungus Aspergillus fumigatus.</title>
        <authorList>
            <person name="Fedorova N.D."/>
            <person name="Khaldi N."/>
            <person name="Joardar V.S."/>
            <person name="Maiti R."/>
            <person name="Amedeo P."/>
            <person name="Anderson M.J."/>
            <person name="Crabtree J."/>
            <person name="Silva J.C."/>
            <person name="Badger J.H."/>
            <person name="Albarraq A."/>
            <person name="Angiuoli S."/>
            <person name="Bussey H."/>
            <person name="Bowyer P."/>
            <person name="Cotty P.J."/>
            <person name="Dyer P.S."/>
            <person name="Egan A."/>
            <person name="Galens K."/>
            <person name="Fraser-Liggett C.M."/>
            <person name="Haas B.J."/>
            <person name="Inman J.M."/>
            <person name="Kent R."/>
            <person name="Lemieux S."/>
            <person name="Malavazi I."/>
            <person name="Orvis J."/>
            <person name="Roemer T."/>
            <person name="Ronning C.M."/>
            <person name="Sundaram J.P."/>
            <person name="Sutton G."/>
            <person name="Turner G."/>
            <person name="Venter J.C."/>
            <person name="White O.R."/>
            <person name="Whitty B.R."/>
            <person name="Youngman P."/>
            <person name="Wolfe K.H."/>
            <person name="Goldman G.H."/>
            <person name="Wortman J.R."/>
            <person name="Jiang B."/>
            <person name="Denning D.W."/>
            <person name="Nierman W.C."/>
        </authorList>
    </citation>
    <scope>NUCLEOTIDE SEQUENCE [LARGE SCALE GENOMIC DNA]</scope>
    <source>
        <strain>ATCC 1020 / DSM 3700 / CBS 544.65 / FGSC A1164 / JCM 1740 / NRRL 181 / WB 181</strain>
    </source>
</reference>
<evidence type="ECO:0000250" key="1"/>
<evidence type="ECO:0000255" key="2"/>
<evidence type="ECO:0000255" key="3">
    <source>
        <dbReference type="PROSITE-ProRule" id="PRU01098"/>
    </source>
</evidence>
<evidence type="ECO:0000256" key="4">
    <source>
        <dbReference type="SAM" id="MobiDB-lite"/>
    </source>
</evidence>
<evidence type="ECO:0000305" key="5"/>
<keyword id="KW-0119">Carbohydrate metabolism</keyword>
<keyword id="KW-1003">Cell membrane</keyword>
<keyword id="KW-0136">Cellulose degradation</keyword>
<keyword id="KW-0325">Glycoprotein</keyword>
<keyword id="KW-0326">Glycosidase</keyword>
<keyword id="KW-0336">GPI-anchor</keyword>
<keyword id="KW-0378">Hydrolase</keyword>
<keyword id="KW-0449">Lipoprotein</keyword>
<keyword id="KW-0472">Membrane</keyword>
<keyword id="KW-0624">Polysaccharide degradation</keyword>
<keyword id="KW-1185">Reference proteome</keyword>
<keyword id="KW-0732">Signal</keyword>
<comment type="function">
    <text evidence="1">Mixed-linked glucanase involved in the degradation of complex natural cellulosic substrates.</text>
</comment>
<comment type="catalytic activity">
    <reaction>
        <text>Endohydrolysis of (1-&gt;3)- or (1-&gt;4)-linkages in beta-D-glucans when the glucose residue whose reducing group is involved in the linkage to be hydrolyzed is itself substituted at C-3.</text>
        <dbReference type="EC" id="3.2.1.6"/>
    </reaction>
</comment>
<comment type="subcellular location">
    <subcellularLocation>
        <location evidence="1">Cell membrane</location>
        <topology evidence="1">Lipid-anchor</topology>
        <topology evidence="1">GPI-anchor</topology>
    </subcellularLocation>
</comment>
<comment type="similarity">
    <text evidence="5">Belongs to the glycosyl hydrolase 16 family.</text>
</comment>
<protein>
    <recommendedName>
        <fullName>Probable endo-1,3(4)-beta-glucanase NFIA_089530</fullName>
        <ecNumber>3.2.1.6</ecNumber>
    </recommendedName>
    <alternativeName>
        <fullName>Mixed-linked glucanase NFIA_089530</fullName>
    </alternativeName>
</protein>
<organism>
    <name type="scientific">Neosartorya fischeri (strain ATCC 1020 / DSM 3700 / CBS 544.65 / FGSC A1164 / JCM 1740 / NRRL 181 / WB 181)</name>
    <name type="common">Aspergillus fischerianus</name>
    <dbReference type="NCBI Taxonomy" id="331117"/>
    <lineage>
        <taxon>Eukaryota</taxon>
        <taxon>Fungi</taxon>
        <taxon>Dikarya</taxon>
        <taxon>Ascomycota</taxon>
        <taxon>Pezizomycotina</taxon>
        <taxon>Eurotiomycetes</taxon>
        <taxon>Eurotiomycetidae</taxon>
        <taxon>Eurotiales</taxon>
        <taxon>Aspergillaceae</taxon>
        <taxon>Aspergillus</taxon>
        <taxon>Aspergillus subgen. Fumigati</taxon>
    </lineage>
</organism>
<dbReference type="EC" id="3.2.1.6"/>
<dbReference type="EMBL" id="DS027696">
    <property type="protein sequence ID" value="EAW18996.1"/>
    <property type="molecule type" value="Genomic_DNA"/>
</dbReference>
<dbReference type="RefSeq" id="XP_001260893.1">
    <property type="nucleotide sequence ID" value="XM_001260892.1"/>
</dbReference>
<dbReference type="SMR" id="A1DHY9"/>
<dbReference type="EnsemblFungi" id="EAW18996">
    <property type="protein sequence ID" value="EAW18996"/>
    <property type="gene ID" value="NFIA_089530"/>
</dbReference>
<dbReference type="GeneID" id="4587451"/>
<dbReference type="KEGG" id="nfi:NFIA_089530"/>
<dbReference type="VEuPathDB" id="FungiDB:NFIA_089530"/>
<dbReference type="eggNOG" id="ENOG502QUM3">
    <property type="taxonomic scope" value="Eukaryota"/>
</dbReference>
<dbReference type="HOGENOM" id="CLU_016972_4_0_1"/>
<dbReference type="OMA" id="FYMGVDY"/>
<dbReference type="OrthoDB" id="192832at2759"/>
<dbReference type="Proteomes" id="UP000006702">
    <property type="component" value="Unassembled WGS sequence"/>
</dbReference>
<dbReference type="GO" id="GO:0005886">
    <property type="term" value="C:plasma membrane"/>
    <property type="evidence" value="ECO:0007669"/>
    <property type="project" value="UniProtKB-SubCell"/>
</dbReference>
<dbReference type="GO" id="GO:0098552">
    <property type="term" value="C:side of membrane"/>
    <property type="evidence" value="ECO:0007669"/>
    <property type="project" value="UniProtKB-KW"/>
</dbReference>
<dbReference type="GO" id="GO:0052861">
    <property type="term" value="F:endo-1,3(4)-beta-glucanase activity"/>
    <property type="evidence" value="ECO:0007669"/>
    <property type="project" value="UniProtKB-EC"/>
</dbReference>
<dbReference type="GO" id="GO:0030245">
    <property type="term" value="P:cellulose catabolic process"/>
    <property type="evidence" value="ECO:0007669"/>
    <property type="project" value="UniProtKB-KW"/>
</dbReference>
<dbReference type="CDD" id="cd02181">
    <property type="entry name" value="GH16_fungal_Lam16A_glucanase"/>
    <property type="match status" value="1"/>
</dbReference>
<dbReference type="FunFam" id="2.60.120.200:FF:000114">
    <property type="entry name" value="Probable endo-1,3(4)-beta-glucanase NFIA_089530"/>
    <property type="match status" value="1"/>
</dbReference>
<dbReference type="Gene3D" id="2.60.120.200">
    <property type="match status" value="1"/>
</dbReference>
<dbReference type="InterPro" id="IPR013320">
    <property type="entry name" value="ConA-like_dom_sf"/>
</dbReference>
<dbReference type="InterPro" id="IPR000757">
    <property type="entry name" value="GH16"/>
</dbReference>
<dbReference type="InterPro" id="IPR050546">
    <property type="entry name" value="Glycosyl_Hydrlase_16"/>
</dbReference>
<dbReference type="PANTHER" id="PTHR10963:SF58">
    <property type="entry name" value="ENDO-1,3(4)-BETA-GLUCANASE XGEA"/>
    <property type="match status" value="1"/>
</dbReference>
<dbReference type="PANTHER" id="PTHR10963">
    <property type="entry name" value="GLYCOSYL HYDROLASE-RELATED"/>
    <property type="match status" value="1"/>
</dbReference>
<dbReference type="SUPFAM" id="SSF49899">
    <property type="entry name" value="Concanavalin A-like lectins/glucanases"/>
    <property type="match status" value="1"/>
</dbReference>
<dbReference type="PROSITE" id="PS51762">
    <property type="entry name" value="GH16_2"/>
    <property type="match status" value="1"/>
</dbReference>
<name>EGLX_NEOFI</name>